<accession>Q9SLH9</accession>
<name>FB59_ARATH</name>
<reference key="1">
    <citation type="journal article" date="2000" name="Nature">
        <title>Sequence and analysis of chromosome 1 of the plant Arabidopsis thaliana.</title>
        <authorList>
            <person name="Theologis A."/>
            <person name="Ecker J.R."/>
            <person name="Palm C.J."/>
            <person name="Federspiel N.A."/>
            <person name="Kaul S."/>
            <person name="White O."/>
            <person name="Alonso J."/>
            <person name="Altafi H."/>
            <person name="Araujo R."/>
            <person name="Bowman C.L."/>
            <person name="Brooks S.Y."/>
            <person name="Buehler E."/>
            <person name="Chan A."/>
            <person name="Chao Q."/>
            <person name="Chen H."/>
            <person name="Cheuk R.F."/>
            <person name="Chin C.W."/>
            <person name="Chung M.K."/>
            <person name="Conn L."/>
            <person name="Conway A.B."/>
            <person name="Conway A.R."/>
            <person name="Creasy T.H."/>
            <person name="Dewar K."/>
            <person name="Dunn P."/>
            <person name="Etgu P."/>
            <person name="Feldblyum T.V."/>
            <person name="Feng J.-D."/>
            <person name="Fong B."/>
            <person name="Fujii C.Y."/>
            <person name="Gill J.E."/>
            <person name="Goldsmith A.D."/>
            <person name="Haas B."/>
            <person name="Hansen N.F."/>
            <person name="Hughes B."/>
            <person name="Huizar L."/>
            <person name="Hunter J.L."/>
            <person name="Jenkins J."/>
            <person name="Johnson-Hopson C."/>
            <person name="Khan S."/>
            <person name="Khaykin E."/>
            <person name="Kim C.J."/>
            <person name="Koo H.L."/>
            <person name="Kremenetskaia I."/>
            <person name="Kurtz D.B."/>
            <person name="Kwan A."/>
            <person name="Lam B."/>
            <person name="Langin-Hooper S."/>
            <person name="Lee A."/>
            <person name="Lee J.M."/>
            <person name="Lenz C.A."/>
            <person name="Li J.H."/>
            <person name="Li Y.-P."/>
            <person name="Lin X."/>
            <person name="Liu S.X."/>
            <person name="Liu Z.A."/>
            <person name="Luros J.S."/>
            <person name="Maiti R."/>
            <person name="Marziali A."/>
            <person name="Militscher J."/>
            <person name="Miranda M."/>
            <person name="Nguyen M."/>
            <person name="Nierman W.C."/>
            <person name="Osborne B.I."/>
            <person name="Pai G."/>
            <person name="Peterson J."/>
            <person name="Pham P.K."/>
            <person name="Rizzo M."/>
            <person name="Rooney T."/>
            <person name="Rowley D."/>
            <person name="Sakano H."/>
            <person name="Salzberg S.L."/>
            <person name="Schwartz J.R."/>
            <person name="Shinn P."/>
            <person name="Southwick A.M."/>
            <person name="Sun H."/>
            <person name="Tallon L.J."/>
            <person name="Tambunga G."/>
            <person name="Toriumi M.J."/>
            <person name="Town C.D."/>
            <person name="Utterback T."/>
            <person name="Van Aken S."/>
            <person name="Vaysberg M."/>
            <person name="Vysotskaia V.S."/>
            <person name="Walker M."/>
            <person name="Wu D."/>
            <person name="Yu G."/>
            <person name="Fraser C.M."/>
            <person name="Venter J.C."/>
            <person name="Davis R.W."/>
        </authorList>
    </citation>
    <scope>NUCLEOTIDE SEQUENCE [LARGE SCALE GENOMIC DNA]</scope>
    <source>
        <strain>cv. Columbia</strain>
    </source>
</reference>
<reference key="2">
    <citation type="journal article" date="2017" name="Plant J.">
        <title>Araport11: a complete reannotation of the Arabidopsis thaliana reference genome.</title>
        <authorList>
            <person name="Cheng C.Y."/>
            <person name="Krishnakumar V."/>
            <person name="Chan A.P."/>
            <person name="Thibaud-Nissen F."/>
            <person name="Schobel S."/>
            <person name="Town C.D."/>
        </authorList>
    </citation>
    <scope>GENOME REANNOTATION</scope>
    <source>
        <strain>cv. Columbia</strain>
    </source>
</reference>
<reference key="3">
    <citation type="submission" date="2004-09" db="EMBL/GenBank/DDBJ databases">
        <authorList>
            <consortium name="Center for eukaryotic structural genomics (CESG)"/>
        </authorList>
    </citation>
    <scope>NUCLEOTIDE SEQUENCE [LARGE SCALE MRNA] OF 2-362</scope>
    <source>
        <strain>cv. Columbia</strain>
    </source>
</reference>
<organism>
    <name type="scientific">Arabidopsis thaliana</name>
    <name type="common">Mouse-ear cress</name>
    <dbReference type="NCBI Taxonomy" id="3702"/>
    <lineage>
        <taxon>Eukaryota</taxon>
        <taxon>Viridiplantae</taxon>
        <taxon>Streptophyta</taxon>
        <taxon>Embryophyta</taxon>
        <taxon>Tracheophyta</taxon>
        <taxon>Spermatophyta</taxon>
        <taxon>Magnoliopsida</taxon>
        <taxon>eudicotyledons</taxon>
        <taxon>Gunneridae</taxon>
        <taxon>Pentapetalae</taxon>
        <taxon>rosids</taxon>
        <taxon>malvids</taxon>
        <taxon>Brassicales</taxon>
        <taxon>Brassicaceae</taxon>
        <taxon>Camelineae</taxon>
        <taxon>Arabidopsis</taxon>
    </lineage>
</organism>
<feature type="chain" id="PRO_0000283333" description="F-box protein At1g54550">
    <location>
        <begin position="1"/>
        <end position="362"/>
    </location>
</feature>
<feature type="domain" description="F-box" evidence="1">
    <location>
        <begin position="1"/>
        <end position="47"/>
    </location>
</feature>
<feature type="sequence conflict" description="In Ref. 3; BT011858." evidence="2" ref="3">
    <original>V</original>
    <variation>A</variation>
    <location>
        <position position="324"/>
    </location>
</feature>
<sequence>MATVTDLPDDLVREIFSRVPLTSLRAVRSTCKKWNAISKYDILGKKAAAKNQFLEFMVTDSRVCSLRLDLQGIRSEEDLIDLSIKQISIPNKVDQVEISQVYHCDGLLLCIAKDNSSVMVWNPYLGQTKLIQPRKKLHRYDKFALGYDNNRNHKILRFLYEGSPRNVIIDVYDFSSDSWRVLDIDIDWHELFSHNSVSLKGNTYFFGRKGPRLPMLFKPPSRRFEYLTLSCVRNEKLAVLYSHLNRFGTIEICISTKIDPSAVSWTTFLRIDMTLINGLPDNFFVHSYATSFFFDEEKKVAVLFGTNRYRGRETCQYYQRACIVGDSGYFKAVNIELVFNSQLQSCQLVSSSYVPSLVQLQD</sequence>
<gene>
    <name type="ordered locus">At1g54550</name>
    <name type="ORF">F20D21.36</name>
</gene>
<evidence type="ECO:0000255" key="1">
    <source>
        <dbReference type="PROSITE-ProRule" id="PRU00080"/>
    </source>
</evidence>
<evidence type="ECO:0000305" key="2"/>
<protein>
    <recommendedName>
        <fullName>F-box protein At1g54550</fullName>
    </recommendedName>
</protein>
<dbReference type="EMBL" id="AC005287">
    <property type="protein sequence ID" value="AAD25633.1"/>
    <property type="molecule type" value="Genomic_DNA"/>
</dbReference>
<dbReference type="EMBL" id="CP002684">
    <property type="protein sequence ID" value="AEE33117.1"/>
    <property type="molecule type" value="Genomic_DNA"/>
</dbReference>
<dbReference type="EMBL" id="BT011858">
    <property type="status" value="NOT_ANNOTATED_CDS"/>
    <property type="molecule type" value="mRNA"/>
</dbReference>
<dbReference type="PIR" id="E96587">
    <property type="entry name" value="E96587"/>
</dbReference>
<dbReference type="RefSeq" id="NP_564661.1">
    <property type="nucleotide sequence ID" value="NM_104333.1"/>
</dbReference>
<dbReference type="SMR" id="Q9SLH9"/>
<dbReference type="FunCoup" id="Q9SLH9">
    <property type="interactions" value="1"/>
</dbReference>
<dbReference type="PaxDb" id="3702-AT1G54550.1"/>
<dbReference type="ProteomicsDB" id="230679"/>
<dbReference type="DNASU" id="841897"/>
<dbReference type="EnsemblPlants" id="AT1G54550.1">
    <property type="protein sequence ID" value="AT1G54550.1"/>
    <property type="gene ID" value="AT1G54550"/>
</dbReference>
<dbReference type="GeneID" id="841897"/>
<dbReference type="Gramene" id="AT1G54550.1">
    <property type="protein sequence ID" value="AT1G54550.1"/>
    <property type="gene ID" value="AT1G54550"/>
</dbReference>
<dbReference type="KEGG" id="ath:AT1G54550"/>
<dbReference type="Araport" id="AT1G54550"/>
<dbReference type="TAIR" id="AT1G54550"/>
<dbReference type="HOGENOM" id="CLU_034692_0_0_1"/>
<dbReference type="InParanoid" id="Q9SLH9"/>
<dbReference type="OMA" id="DIDWHEL"/>
<dbReference type="OrthoDB" id="1054630at2759"/>
<dbReference type="PhylomeDB" id="Q9SLH9"/>
<dbReference type="PRO" id="PR:Q9SLH9"/>
<dbReference type="Proteomes" id="UP000006548">
    <property type="component" value="Chromosome 1"/>
</dbReference>
<dbReference type="ExpressionAtlas" id="Q9SLH9">
    <property type="expression patterns" value="baseline and differential"/>
</dbReference>
<dbReference type="CDD" id="cd22157">
    <property type="entry name" value="F-box_AtFBW1-like"/>
    <property type="match status" value="1"/>
</dbReference>
<dbReference type="Gene3D" id="1.20.1280.50">
    <property type="match status" value="1"/>
</dbReference>
<dbReference type="InterPro" id="IPR006527">
    <property type="entry name" value="F-box-assoc_dom_typ1"/>
</dbReference>
<dbReference type="InterPro" id="IPR017451">
    <property type="entry name" value="F-box-assoc_interact_dom"/>
</dbReference>
<dbReference type="InterPro" id="IPR036047">
    <property type="entry name" value="F-box-like_dom_sf"/>
</dbReference>
<dbReference type="InterPro" id="IPR001810">
    <property type="entry name" value="F-box_dom"/>
</dbReference>
<dbReference type="InterPro" id="IPR011043">
    <property type="entry name" value="Gal_Oxase/kelch_b-propeller"/>
</dbReference>
<dbReference type="InterPro" id="IPR050796">
    <property type="entry name" value="SCF_F-box_component"/>
</dbReference>
<dbReference type="NCBIfam" id="TIGR01640">
    <property type="entry name" value="F_box_assoc_1"/>
    <property type="match status" value="1"/>
</dbReference>
<dbReference type="PANTHER" id="PTHR31672">
    <property type="entry name" value="BNACNNG10540D PROTEIN"/>
    <property type="match status" value="1"/>
</dbReference>
<dbReference type="PANTHER" id="PTHR31672:SF13">
    <property type="entry name" value="F-BOX PROTEIN CPR30-LIKE"/>
    <property type="match status" value="1"/>
</dbReference>
<dbReference type="Pfam" id="PF00646">
    <property type="entry name" value="F-box"/>
    <property type="match status" value="1"/>
</dbReference>
<dbReference type="Pfam" id="PF07734">
    <property type="entry name" value="FBA_1"/>
    <property type="match status" value="1"/>
</dbReference>
<dbReference type="SMART" id="SM00256">
    <property type="entry name" value="FBOX"/>
    <property type="match status" value="1"/>
</dbReference>
<dbReference type="SUPFAM" id="SSF81383">
    <property type="entry name" value="F-box domain"/>
    <property type="match status" value="1"/>
</dbReference>
<dbReference type="SUPFAM" id="SSF50965">
    <property type="entry name" value="Galactose oxidase, central domain"/>
    <property type="match status" value="1"/>
</dbReference>
<dbReference type="PROSITE" id="PS50181">
    <property type="entry name" value="FBOX"/>
    <property type="match status" value="1"/>
</dbReference>
<keyword id="KW-1185">Reference proteome</keyword>
<proteinExistence type="evidence at transcript level"/>